<organism>
    <name type="scientific">Bacillus subtilis (strain 168)</name>
    <dbReference type="NCBI Taxonomy" id="224308"/>
    <lineage>
        <taxon>Bacteria</taxon>
        <taxon>Bacillati</taxon>
        <taxon>Bacillota</taxon>
        <taxon>Bacilli</taxon>
        <taxon>Bacillales</taxon>
        <taxon>Bacillaceae</taxon>
        <taxon>Bacillus</taxon>
    </lineage>
</organism>
<evidence type="ECO:0000250" key="1"/>
<evidence type="ECO:0000255" key="2">
    <source>
        <dbReference type="PROSITE-ProRule" id="PRU10001"/>
    </source>
</evidence>
<evidence type="ECO:0000305" key="3"/>
<sequence length="273" mass="29433">MGRLENKTAVITGAATGIGQATAEVFANEGARVIIGDINKDQMEETVDAIRKNGGQAESFHLDVSDENSVKAFADQIKDACGTIDILFNNAGVDQEGGKVHEYPVDLFDRIIAVDLRGTFLCSKYLIPLMLENGGSIINTSSMSGRAADLDRSGYNAAKGGITNLTKAMAIDYARNGIRVNSISPGTIETPLIDKLAGTKEQEMGEQFREANKWITPLGRLGQPKEMATVALFLASDDSSYVTGEDITADGGIMAYTWPGKMLIEEKWKEETK</sequence>
<gene>
    <name type="primary">yxbG</name>
    <name type="synonym">E3BR</name>
    <name type="synonym">yxaU</name>
    <name type="ordered locus">BSU39840</name>
</gene>
<comment type="similarity">
    <text evidence="3">Belongs to the short-chain dehydrogenases/reductases (SDR) family.</text>
</comment>
<comment type="sequence caution" evidence="3">
    <conflict type="frameshift">
        <sequence resource="EMBL-CDS" id="BAA21601"/>
    </conflict>
</comment>
<accession>P46331</accession>
<protein>
    <recommendedName>
        <fullName>Uncharacterized oxidoreductase YxbG</fullName>
        <ecNumber>1.-.-.-</ecNumber>
    </recommendedName>
</protein>
<name>YXBG_BACSU</name>
<reference key="1">
    <citation type="journal article" date="1995" name="DNA Res.">
        <title>Cloning and sequencing of a 36-kb region of the Bacillus subtilis genome between the gnt and iol operons.</title>
        <authorList>
            <person name="Yoshida K."/>
            <person name="Seki S."/>
            <person name="Fujimura M."/>
            <person name="Miwa Y."/>
            <person name="Fujita Y."/>
        </authorList>
    </citation>
    <scope>NUCLEOTIDE SEQUENCE [GENOMIC DNA]</scope>
    <source>
        <strain>168 / BGSC1A1</strain>
    </source>
</reference>
<reference key="2">
    <citation type="journal article" date="1997" name="Nature">
        <title>The complete genome sequence of the Gram-positive bacterium Bacillus subtilis.</title>
        <authorList>
            <person name="Kunst F."/>
            <person name="Ogasawara N."/>
            <person name="Moszer I."/>
            <person name="Albertini A.M."/>
            <person name="Alloni G."/>
            <person name="Azevedo V."/>
            <person name="Bertero M.G."/>
            <person name="Bessieres P."/>
            <person name="Bolotin A."/>
            <person name="Borchert S."/>
            <person name="Borriss R."/>
            <person name="Boursier L."/>
            <person name="Brans A."/>
            <person name="Braun M."/>
            <person name="Brignell S.C."/>
            <person name="Bron S."/>
            <person name="Brouillet S."/>
            <person name="Bruschi C.V."/>
            <person name="Caldwell B."/>
            <person name="Capuano V."/>
            <person name="Carter N.M."/>
            <person name="Choi S.-K."/>
            <person name="Codani J.-J."/>
            <person name="Connerton I.F."/>
            <person name="Cummings N.J."/>
            <person name="Daniel R.A."/>
            <person name="Denizot F."/>
            <person name="Devine K.M."/>
            <person name="Duesterhoeft A."/>
            <person name="Ehrlich S.D."/>
            <person name="Emmerson P.T."/>
            <person name="Entian K.-D."/>
            <person name="Errington J."/>
            <person name="Fabret C."/>
            <person name="Ferrari E."/>
            <person name="Foulger D."/>
            <person name="Fritz C."/>
            <person name="Fujita M."/>
            <person name="Fujita Y."/>
            <person name="Fuma S."/>
            <person name="Galizzi A."/>
            <person name="Galleron N."/>
            <person name="Ghim S.-Y."/>
            <person name="Glaser P."/>
            <person name="Goffeau A."/>
            <person name="Golightly E.J."/>
            <person name="Grandi G."/>
            <person name="Guiseppi G."/>
            <person name="Guy B.J."/>
            <person name="Haga K."/>
            <person name="Haiech J."/>
            <person name="Harwood C.R."/>
            <person name="Henaut A."/>
            <person name="Hilbert H."/>
            <person name="Holsappel S."/>
            <person name="Hosono S."/>
            <person name="Hullo M.-F."/>
            <person name="Itaya M."/>
            <person name="Jones L.-M."/>
            <person name="Joris B."/>
            <person name="Karamata D."/>
            <person name="Kasahara Y."/>
            <person name="Klaerr-Blanchard M."/>
            <person name="Klein C."/>
            <person name="Kobayashi Y."/>
            <person name="Koetter P."/>
            <person name="Koningstein G."/>
            <person name="Krogh S."/>
            <person name="Kumano M."/>
            <person name="Kurita K."/>
            <person name="Lapidus A."/>
            <person name="Lardinois S."/>
            <person name="Lauber J."/>
            <person name="Lazarevic V."/>
            <person name="Lee S.-M."/>
            <person name="Levine A."/>
            <person name="Liu H."/>
            <person name="Masuda S."/>
            <person name="Mauel C."/>
            <person name="Medigue C."/>
            <person name="Medina N."/>
            <person name="Mellado R.P."/>
            <person name="Mizuno M."/>
            <person name="Moestl D."/>
            <person name="Nakai S."/>
            <person name="Noback M."/>
            <person name="Noone D."/>
            <person name="O'Reilly M."/>
            <person name="Ogawa K."/>
            <person name="Ogiwara A."/>
            <person name="Oudega B."/>
            <person name="Park S.-H."/>
            <person name="Parro V."/>
            <person name="Pohl T.M."/>
            <person name="Portetelle D."/>
            <person name="Porwollik S."/>
            <person name="Prescott A.M."/>
            <person name="Presecan E."/>
            <person name="Pujic P."/>
            <person name="Purnelle B."/>
            <person name="Rapoport G."/>
            <person name="Rey M."/>
            <person name="Reynolds S."/>
            <person name="Rieger M."/>
            <person name="Rivolta C."/>
            <person name="Rocha E."/>
            <person name="Roche B."/>
            <person name="Rose M."/>
            <person name="Sadaie Y."/>
            <person name="Sato T."/>
            <person name="Scanlan E."/>
            <person name="Schleich S."/>
            <person name="Schroeter R."/>
            <person name="Scoffone F."/>
            <person name="Sekiguchi J."/>
            <person name="Sekowska A."/>
            <person name="Seror S.J."/>
            <person name="Serror P."/>
            <person name="Shin B.-S."/>
            <person name="Soldo B."/>
            <person name="Sorokin A."/>
            <person name="Tacconi E."/>
            <person name="Takagi T."/>
            <person name="Takahashi H."/>
            <person name="Takemaru K."/>
            <person name="Takeuchi M."/>
            <person name="Tamakoshi A."/>
            <person name="Tanaka T."/>
            <person name="Terpstra P."/>
            <person name="Tognoni A."/>
            <person name="Tosato V."/>
            <person name="Uchiyama S."/>
            <person name="Vandenbol M."/>
            <person name="Vannier F."/>
            <person name="Vassarotti A."/>
            <person name="Viari A."/>
            <person name="Wambutt R."/>
            <person name="Wedler E."/>
            <person name="Wedler H."/>
            <person name="Weitzenegger T."/>
            <person name="Winters P."/>
            <person name="Wipat A."/>
            <person name="Yamamoto H."/>
            <person name="Yamane K."/>
            <person name="Yasumoto K."/>
            <person name="Yata K."/>
            <person name="Yoshida K."/>
            <person name="Yoshikawa H.-F."/>
            <person name="Zumstein E."/>
            <person name="Yoshikawa H."/>
            <person name="Danchin A."/>
        </authorList>
    </citation>
    <scope>NUCLEOTIDE SEQUENCE [LARGE SCALE GENOMIC DNA]</scope>
    <source>
        <strain>168</strain>
    </source>
</reference>
<proteinExistence type="inferred from homology"/>
<dbReference type="EC" id="1.-.-.-"/>
<dbReference type="EMBL" id="AB005554">
    <property type="protein sequence ID" value="BAA21601.1"/>
    <property type="status" value="ALT_FRAME"/>
    <property type="molecule type" value="Genomic_DNA"/>
</dbReference>
<dbReference type="EMBL" id="AL009126">
    <property type="protein sequence ID" value="CAB16020.2"/>
    <property type="molecule type" value="Genomic_DNA"/>
</dbReference>
<dbReference type="PIR" id="B70073">
    <property type="entry name" value="B70073"/>
</dbReference>
<dbReference type="RefSeq" id="NP_391863.2">
    <property type="nucleotide sequence ID" value="NC_000964.3"/>
</dbReference>
<dbReference type="RefSeq" id="WP_003244072.1">
    <property type="nucleotide sequence ID" value="NZ_OZ025638.1"/>
</dbReference>
<dbReference type="SMR" id="P46331"/>
<dbReference type="FunCoup" id="P46331">
    <property type="interactions" value="314"/>
</dbReference>
<dbReference type="STRING" id="224308.BSU39840"/>
<dbReference type="PaxDb" id="224308-BSU39840"/>
<dbReference type="EnsemblBacteria" id="CAB16020">
    <property type="protein sequence ID" value="CAB16020"/>
    <property type="gene ID" value="BSU_39840"/>
</dbReference>
<dbReference type="GeneID" id="937642"/>
<dbReference type="KEGG" id="bsu:BSU39840"/>
<dbReference type="PATRIC" id="fig|224308.179.peg.4310"/>
<dbReference type="eggNOG" id="COG1028">
    <property type="taxonomic scope" value="Bacteria"/>
</dbReference>
<dbReference type="InParanoid" id="P46331"/>
<dbReference type="OrthoDB" id="9803333at2"/>
<dbReference type="PhylomeDB" id="P46331"/>
<dbReference type="BioCyc" id="BSUB:BSU39840-MONOMER"/>
<dbReference type="Proteomes" id="UP000001570">
    <property type="component" value="Chromosome"/>
</dbReference>
<dbReference type="GO" id="GO:0016491">
    <property type="term" value="F:oxidoreductase activity"/>
    <property type="evidence" value="ECO:0007669"/>
    <property type="project" value="UniProtKB-KW"/>
</dbReference>
<dbReference type="CDD" id="cd05233">
    <property type="entry name" value="SDR_c"/>
    <property type="match status" value="1"/>
</dbReference>
<dbReference type="FunFam" id="3.40.50.720:FF:000084">
    <property type="entry name" value="Short-chain dehydrogenase reductase"/>
    <property type="match status" value="1"/>
</dbReference>
<dbReference type="Gene3D" id="3.40.50.720">
    <property type="entry name" value="NAD(P)-binding Rossmann-like Domain"/>
    <property type="match status" value="1"/>
</dbReference>
<dbReference type="InterPro" id="IPR036291">
    <property type="entry name" value="NAD(P)-bd_dom_sf"/>
</dbReference>
<dbReference type="InterPro" id="IPR020904">
    <property type="entry name" value="Sc_DH/Rdtase_CS"/>
</dbReference>
<dbReference type="InterPro" id="IPR002347">
    <property type="entry name" value="SDR_fam"/>
</dbReference>
<dbReference type="NCBIfam" id="NF005559">
    <property type="entry name" value="PRK07231.1"/>
    <property type="match status" value="1"/>
</dbReference>
<dbReference type="NCBIfam" id="NF006366">
    <property type="entry name" value="PRK08589.1"/>
    <property type="match status" value="1"/>
</dbReference>
<dbReference type="PANTHER" id="PTHR42760:SF115">
    <property type="entry name" value="3-OXOACYL-[ACYL-CARRIER-PROTEIN] REDUCTASE FABG"/>
    <property type="match status" value="1"/>
</dbReference>
<dbReference type="PANTHER" id="PTHR42760">
    <property type="entry name" value="SHORT-CHAIN DEHYDROGENASES/REDUCTASES FAMILY MEMBER"/>
    <property type="match status" value="1"/>
</dbReference>
<dbReference type="Pfam" id="PF13561">
    <property type="entry name" value="adh_short_C2"/>
    <property type="match status" value="1"/>
</dbReference>
<dbReference type="PRINTS" id="PR00081">
    <property type="entry name" value="GDHRDH"/>
</dbReference>
<dbReference type="PRINTS" id="PR00080">
    <property type="entry name" value="SDRFAMILY"/>
</dbReference>
<dbReference type="SUPFAM" id="SSF51735">
    <property type="entry name" value="NAD(P)-binding Rossmann-fold domains"/>
    <property type="match status" value="1"/>
</dbReference>
<dbReference type="PROSITE" id="PS00061">
    <property type="entry name" value="ADH_SHORT"/>
    <property type="match status" value="1"/>
</dbReference>
<keyword id="KW-0520">NAD</keyword>
<keyword id="KW-0560">Oxidoreductase</keyword>
<keyword id="KW-1185">Reference proteome</keyword>
<feature type="chain" id="PRO_0000054852" description="Uncharacterized oxidoreductase YxbG">
    <location>
        <begin position="1"/>
        <end position="273"/>
    </location>
</feature>
<feature type="active site" description="Proton acceptor" evidence="2">
    <location>
        <position position="155"/>
    </location>
</feature>
<feature type="binding site" evidence="1">
    <location>
        <begin position="10"/>
        <end position="34"/>
    </location>
    <ligand>
        <name>NAD(+)</name>
        <dbReference type="ChEBI" id="CHEBI:57540"/>
    </ligand>
</feature>
<feature type="binding site" evidence="1">
    <location>
        <position position="142"/>
    </location>
    <ligand>
        <name>substrate</name>
    </ligand>
</feature>